<comment type="function">
    <text evidence="1">Oxidative deamination of D-amino acids.</text>
</comment>
<comment type="catalytic activity">
    <reaction evidence="1">
        <text>a D-alpha-amino acid + A + H2O = a 2-oxocarboxylate + AH2 + NH4(+)</text>
        <dbReference type="Rhea" id="RHEA:18125"/>
        <dbReference type="ChEBI" id="CHEBI:13193"/>
        <dbReference type="ChEBI" id="CHEBI:15377"/>
        <dbReference type="ChEBI" id="CHEBI:17499"/>
        <dbReference type="ChEBI" id="CHEBI:28938"/>
        <dbReference type="ChEBI" id="CHEBI:35179"/>
        <dbReference type="ChEBI" id="CHEBI:59871"/>
    </reaction>
</comment>
<comment type="cofactor">
    <cofactor evidence="1">
        <name>FAD</name>
        <dbReference type="ChEBI" id="CHEBI:57692"/>
    </cofactor>
</comment>
<comment type="pathway">
    <text>Amino-acid degradation; D-alanine degradation; NH(3) and pyruvate from D-alanine: step 1/1.</text>
</comment>
<comment type="similarity">
    <text evidence="1">Belongs to the DadA oxidoreductase family.</text>
</comment>
<accession>B1XA76</accession>
<feature type="chain" id="PRO_1000138651" description="D-amino acid dehydrogenase">
    <location>
        <begin position="1"/>
        <end position="432"/>
    </location>
</feature>
<feature type="binding site" evidence="1">
    <location>
        <begin position="3"/>
        <end position="17"/>
    </location>
    <ligand>
        <name>FAD</name>
        <dbReference type="ChEBI" id="CHEBI:57692"/>
    </ligand>
</feature>
<protein>
    <recommendedName>
        <fullName evidence="1">D-amino acid dehydrogenase</fullName>
        <ecNumber evidence="1">1.4.99.-</ecNumber>
    </recommendedName>
</protein>
<sequence length="432" mass="47607">MRVVILGSGVVGVASAWYLNQAGHEVTVIDREPGAALETSAANAGQISPGYAAPWAAPGVPLKAIKWMFQRHAPLAVRLDGTQFQLKWMWQMLRNCDTSHYMENKGRMVRLAEYSRDCLKALRAETNIQYEGRQGGTLQLFRTEQQYENATRDIAVLEDAGVPYQLLESSRLAEVEPALAEVAHKLTGGLQLPNDETGDCQLFTQNLARMAEQAGVKFRFNTPVDQLLCDGEQIYGVKCGDEVIKADAYVMAFGSYSTAMLKGIVDIPVYPLKGYSLTIPIAQEDGAPVSTILDETYKIAITRFDNRIRVGGMAEIVGFNTELLQPRRETLEMVVRDLYPRGGHVEQATFWTGLRPMTPDGTPVVGRTRFKNLWLNTGHGTLGWTMACGSGQLLSDLLSGRTPAIPYEDLSVARYSRGFTPSRPGHLHGAHS</sequence>
<proteinExistence type="inferred from homology"/>
<gene>
    <name evidence="1" type="primary">dadA</name>
    <name type="ordered locus">ECDH10B_1242</name>
</gene>
<reference key="1">
    <citation type="journal article" date="2008" name="J. Bacteriol.">
        <title>The complete genome sequence of Escherichia coli DH10B: insights into the biology of a laboratory workhorse.</title>
        <authorList>
            <person name="Durfee T."/>
            <person name="Nelson R."/>
            <person name="Baldwin S."/>
            <person name="Plunkett G. III"/>
            <person name="Burland V."/>
            <person name="Mau B."/>
            <person name="Petrosino J.F."/>
            <person name="Qin X."/>
            <person name="Muzny D.M."/>
            <person name="Ayele M."/>
            <person name="Gibbs R.A."/>
            <person name="Csorgo B."/>
            <person name="Posfai G."/>
            <person name="Weinstock G.M."/>
            <person name="Blattner F.R."/>
        </authorList>
    </citation>
    <scope>NUCLEOTIDE SEQUENCE [LARGE SCALE GENOMIC DNA]</scope>
    <source>
        <strain>K12 / DH10B</strain>
    </source>
</reference>
<keyword id="KW-0274">FAD</keyword>
<keyword id="KW-0285">Flavoprotein</keyword>
<keyword id="KW-0560">Oxidoreductase</keyword>
<evidence type="ECO:0000255" key="1">
    <source>
        <dbReference type="HAMAP-Rule" id="MF_01202"/>
    </source>
</evidence>
<name>DADA_ECODH</name>
<dbReference type="EC" id="1.4.99.-" evidence="1"/>
<dbReference type="EMBL" id="CP000948">
    <property type="protein sequence ID" value="ACB02359.1"/>
    <property type="molecule type" value="Genomic_DNA"/>
</dbReference>
<dbReference type="RefSeq" id="WP_001266908.1">
    <property type="nucleotide sequence ID" value="NC_010473.1"/>
</dbReference>
<dbReference type="SMR" id="B1XA76"/>
<dbReference type="GeneID" id="93776243"/>
<dbReference type="KEGG" id="ecd:ECDH10B_1242"/>
<dbReference type="HOGENOM" id="CLU_007884_9_2_6"/>
<dbReference type="UniPathway" id="UPA00043">
    <property type="reaction ID" value="UER00498"/>
</dbReference>
<dbReference type="GO" id="GO:0005737">
    <property type="term" value="C:cytoplasm"/>
    <property type="evidence" value="ECO:0007669"/>
    <property type="project" value="TreeGrafter"/>
</dbReference>
<dbReference type="GO" id="GO:0005886">
    <property type="term" value="C:plasma membrane"/>
    <property type="evidence" value="ECO:0007669"/>
    <property type="project" value="TreeGrafter"/>
</dbReference>
<dbReference type="GO" id="GO:0008718">
    <property type="term" value="F:D-amino-acid dehydrogenase activity"/>
    <property type="evidence" value="ECO:0007669"/>
    <property type="project" value="UniProtKB-UniRule"/>
</dbReference>
<dbReference type="GO" id="GO:0055130">
    <property type="term" value="P:D-alanine catabolic process"/>
    <property type="evidence" value="ECO:0007669"/>
    <property type="project" value="UniProtKB-UniPathway"/>
</dbReference>
<dbReference type="FunFam" id="3.50.50.60:FF:000020">
    <property type="entry name" value="D-amino acid dehydrogenase"/>
    <property type="match status" value="1"/>
</dbReference>
<dbReference type="Gene3D" id="3.30.9.10">
    <property type="entry name" value="D-Amino Acid Oxidase, subunit A, domain 2"/>
    <property type="match status" value="1"/>
</dbReference>
<dbReference type="Gene3D" id="3.50.50.60">
    <property type="entry name" value="FAD/NAD(P)-binding domain"/>
    <property type="match status" value="2"/>
</dbReference>
<dbReference type="HAMAP" id="MF_01202">
    <property type="entry name" value="DadA"/>
    <property type="match status" value="1"/>
</dbReference>
<dbReference type="InterPro" id="IPR023080">
    <property type="entry name" value="DadA"/>
</dbReference>
<dbReference type="InterPro" id="IPR006076">
    <property type="entry name" value="FAD-dep_OxRdtase"/>
</dbReference>
<dbReference type="InterPro" id="IPR036188">
    <property type="entry name" value="FAD/NAD-bd_sf"/>
</dbReference>
<dbReference type="NCBIfam" id="NF001933">
    <property type="entry name" value="PRK00711.1"/>
    <property type="match status" value="1"/>
</dbReference>
<dbReference type="PANTHER" id="PTHR13847:SF280">
    <property type="entry name" value="D-AMINO ACID DEHYDROGENASE"/>
    <property type="match status" value="1"/>
</dbReference>
<dbReference type="PANTHER" id="PTHR13847">
    <property type="entry name" value="SARCOSINE DEHYDROGENASE-RELATED"/>
    <property type="match status" value="1"/>
</dbReference>
<dbReference type="Pfam" id="PF01266">
    <property type="entry name" value="DAO"/>
    <property type="match status" value="1"/>
</dbReference>
<dbReference type="SUPFAM" id="SSF54373">
    <property type="entry name" value="FAD-linked reductases, C-terminal domain"/>
    <property type="match status" value="1"/>
</dbReference>
<dbReference type="SUPFAM" id="SSF51905">
    <property type="entry name" value="FAD/NAD(P)-binding domain"/>
    <property type="match status" value="1"/>
</dbReference>
<organism>
    <name type="scientific">Escherichia coli (strain K12 / DH10B)</name>
    <dbReference type="NCBI Taxonomy" id="316385"/>
    <lineage>
        <taxon>Bacteria</taxon>
        <taxon>Pseudomonadati</taxon>
        <taxon>Pseudomonadota</taxon>
        <taxon>Gammaproteobacteria</taxon>
        <taxon>Enterobacterales</taxon>
        <taxon>Enterobacteriaceae</taxon>
        <taxon>Escherichia</taxon>
    </lineage>
</organism>